<protein>
    <recommendedName>
        <fullName evidence="4">Skeletal aspartic acid-rich protein 1</fullName>
    </recommendedName>
</protein>
<proteinExistence type="evidence at protein level"/>
<sequence length="386" mass="42838">MAFVSCFHLRLLFLCLALFMAAECRPDELNKKVDSDETISDDDVSARVQPNGGKIMIVRDNDYDASDDNDNDNDDDDNNDNDNDNDDDNDVDRDNDNDDDDFDDSNDDMLSFELDSIEEKDSDGNDVGSTEGHSVESFEDRPFSLSSVDRNSNALGVAAINVNLSTKLEDSNADVDIMLYLFREDGTISFGNETFDVQAGTVKFNIKISNWDFCDGSAQDCSEAKAGEYLDVNIKFKSKDTPIEVTDEERKSQNKPAVCKDKDTPDTDSDPDDSSDNANDGDDDDDDDCPHIYNMGGDSEMLLNRGVMNGDTYTAMPFGFPKVEIEDGEKKIKFRVPKFDDNVNIDPSVTPGRVPKNASPSPALCLKIHILFIALLQAVTLFINSW</sequence>
<feature type="signal peptide" evidence="1">
    <location>
        <begin position="1"/>
        <end position="24"/>
    </location>
</feature>
<feature type="chain" id="PRO_0000429555" description="Skeletal aspartic acid-rich protein 1" evidence="1">
    <location>
        <begin position="25"/>
        <end position="386"/>
    </location>
</feature>
<feature type="region of interest" description="Disordered" evidence="2">
    <location>
        <begin position="33"/>
        <end position="145"/>
    </location>
</feature>
<feature type="region of interest" description="Disordered" evidence="2">
    <location>
        <begin position="244"/>
        <end position="291"/>
    </location>
</feature>
<feature type="compositionally biased region" description="Acidic residues" evidence="2">
    <location>
        <begin position="63"/>
        <end position="107"/>
    </location>
</feature>
<feature type="compositionally biased region" description="Basic and acidic residues" evidence="2">
    <location>
        <begin position="133"/>
        <end position="142"/>
    </location>
</feature>
<feature type="compositionally biased region" description="Basic and acidic residues" evidence="2">
    <location>
        <begin position="244"/>
        <end position="265"/>
    </location>
</feature>
<feature type="compositionally biased region" description="Acidic residues" evidence="2">
    <location>
        <begin position="266"/>
        <end position="288"/>
    </location>
</feature>
<reference evidence="5" key="1">
    <citation type="journal article" date="2012" name="Mol. Ecol.">
        <title>Whole transcriptome analysis of the coral Acropora millepora reveals complex responses to CO(2)-driven acidification during the initiation of calcification.</title>
        <authorList>
            <person name="Moya A."/>
            <person name="Huisman L."/>
            <person name="Ball E.E."/>
            <person name="Hayward D.C."/>
            <person name="Grasso L.C."/>
            <person name="Chua C.M."/>
            <person name="Woo H.N."/>
            <person name="Gattuso J.P."/>
            <person name="Foret S."/>
            <person name="Miller D.J."/>
        </authorList>
    </citation>
    <scope>NUCLEOTIDE SEQUENCE [MRNA]</scope>
</reference>
<reference evidence="5" key="2">
    <citation type="journal article" date="2013" name="Mol. Biol. Evol.">
        <title>The skeletal proteome of the coral Acropora millepora: the evolution of calcification by co-option and domain shuffling.</title>
        <authorList>
            <person name="Ramos-Silva P."/>
            <person name="Kaandorp J."/>
            <person name="Huisman L."/>
            <person name="Marie B."/>
            <person name="Zanella-Cleon I."/>
            <person name="Guichard N."/>
            <person name="Miller D.J."/>
            <person name="Marin F."/>
        </authorList>
    </citation>
    <scope>PROTEIN SEQUENCE OF 31-48; 59-151; 167-184; 207-252; 305-332 AND 338-354</scope>
    <scope>TISSUE SPECIFICITY</scope>
    <scope>IDENTIFICATION BY MASS SPECTROMETRY</scope>
</reference>
<keyword id="KW-0903">Direct protein sequencing</keyword>
<keyword id="KW-0964">Secreted</keyword>
<keyword id="KW-0732">Signal</keyword>
<comment type="subcellular location">
    <subcellularLocation>
        <location evidence="6">Secreted</location>
    </subcellularLocation>
</comment>
<comment type="tissue specificity">
    <text evidence="3">Component of the acid-insoluble and acid-soluble organic matrix of the aragonitic skeleton (at protein level).</text>
</comment>
<dbReference type="EMBL" id="JT001945">
    <property type="status" value="NOT_ANNOTATED_CDS"/>
    <property type="molecule type" value="mRNA"/>
</dbReference>
<dbReference type="OrthoDB" id="5977965at2759"/>
<dbReference type="GO" id="GO:0005576">
    <property type="term" value="C:extracellular region"/>
    <property type="evidence" value="ECO:0007669"/>
    <property type="project" value="UniProtKB-SubCell"/>
</dbReference>
<accession>B3EWY6</accession>
<organism>
    <name type="scientific">Acropora millepora</name>
    <name type="common">Staghorn coral</name>
    <name type="synonym">Heteropora millepora</name>
    <dbReference type="NCBI Taxonomy" id="45264"/>
    <lineage>
        <taxon>Eukaryota</taxon>
        <taxon>Metazoa</taxon>
        <taxon>Cnidaria</taxon>
        <taxon>Anthozoa</taxon>
        <taxon>Hexacorallia</taxon>
        <taxon>Scleractinia</taxon>
        <taxon>Astrocoeniina</taxon>
        <taxon>Acroporidae</taxon>
        <taxon>Acropora</taxon>
    </lineage>
</organism>
<evidence type="ECO:0000255" key="1"/>
<evidence type="ECO:0000256" key="2">
    <source>
        <dbReference type="SAM" id="MobiDB-lite"/>
    </source>
</evidence>
<evidence type="ECO:0000269" key="3">
    <source>
    </source>
</evidence>
<evidence type="ECO:0000303" key="4">
    <source>
    </source>
</evidence>
<evidence type="ECO:0000305" key="5"/>
<evidence type="ECO:0000305" key="6">
    <source>
    </source>
</evidence>
<name>SAAR1_ACRMI</name>